<dbReference type="EC" id="2.7.7.87" evidence="1"/>
<dbReference type="EMBL" id="CP000687">
    <property type="protein sequence ID" value="ABY69715.1"/>
    <property type="molecule type" value="Genomic_DNA"/>
</dbReference>
<dbReference type="RefSeq" id="WP_005601623.1">
    <property type="nucleotide sequence ID" value="NC_010278.1"/>
</dbReference>
<dbReference type="SMR" id="B0BQ80"/>
<dbReference type="KEGG" id="apj:APJL_1159"/>
<dbReference type="HOGENOM" id="CLU_031397_6_0_6"/>
<dbReference type="Proteomes" id="UP000008547">
    <property type="component" value="Chromosome"/>
</dbReference>
<dbReference type="GO" id="GO:0005737">
    <property type="term" value="C:cytoplasm"/>
    <property type="evidence" value="ECO:0007669"/>
    <property type="project" value="UniProtKB-SubCell"/>
</dbReference>
<dbReference type="GO" id="GO:0005524">
    <property type="term" value="F:ATP binding"/>
    <property type="evidence" value="ECO:0007669"/>
    <property type="project" value="UniProtKB-UniRule"/>
</dbReference>
<dbReference type="GO" id="GO:0003725">
    <property type="term" value="F:double-stranded RNA binding"/>
    <property type="evidence" value="ECO:0007669"/>
    <property type="project" value="InterPro"/>
</dbReference>
<dbReference type="GO" id="GO:0061710">
    <property type="term" value="F:L-threonylcarbamoyladenylate synthase"/>
    <property type="evidence" value="ECO:0007669"/>
    <property type="project" value="UniProtKB-EC"/>
</dbReference>
<dbReference type="GO" id="GO:0000049">
    <property type="term" value="F:tRNA binding"/>
    <property type="evidence" value="ECO:0007669"/>
    <property type="project" value="TreeGrafter"/>
</dbReference>
<dbReference type="GO" id="GO:0006450">
    <property type="term" value="P:regulation of translational fidelity"/>
    <property type="evidence" value="ECO:0007669"/>
    <property type="project" value="TreeGrafter"/>
</dbReference>
<dbReference type="GO" id="GO:0002949">
    <property type="term" value="P:tRNA threonylcarbamoyladenosine modification"/>
    <property type="evidence" value="ECO:0007669"/>
    <property type="project" value="UniProtKB-UniRule"/>
</dbReference>
<dbReference type="FunFam" id="3.90.870.10:FF:000004">
    <property type="entry name" value="Threonylcarbamoyl-AMP synthase"/>
    <property type="match status" value="1"/>
</dbReference>
<dbReference type="Gene3D" id="3.90.870.10">
    <property type="entry name" value="DHBP synthase"/>
    <property type="match status" value="1"/>
</dbReference>
<dbReference type="HAMAP" id="MF_01852">
    <property type="entry name" value="TsaC"/>
    <property type="match status" value="1"/>
</dbReference>
<dbReference type="InterPro" id="IPR017945">
    <property type="entry name" value="DHBP_synth_RibB-like_a/b_dom"/>
</dbReference>
<dbReference type="InterPro" id="IPR006070">
    <property type="entry name" value="Sua5-like_dom"/>
</dbReference>
<dbReference type="InterPro" id="IPR023535">
    <property type="entry name" value="TC-AMP_synthase"/>
</dbReference>
<dbReference type="InterPro" id="IPR050156">
    <property type="entry name" value="TC-AMP_synthase_SUA5"/>
</dbReference>
<dbReference type="PANTHER" id="PTHR17490">
    <property type="entry name" value="SUA5"/>
    <property type="match status" value="1"/>
</dbReference>
<dbReference type="PANTHER" id="PTHR17490:SF18">
    <property type="entry name" value="THREONYLCARBAMOYL-AMP SYNTHASE"/>
    <property type="match status" value="1"/>
</dbReference>
<dbReference type="Pfam" id="PF01300">
    <property type="entry name" value="Sua5_yciO_yrdC"/>
    <property type="match status" value="1"/>
</dbReference>
<dbReference type="SUPFAM" id="SSF55821">
    <property type="entry name" value="YrdC/RibB"/>
    <property type="match status" value="1"/>
</dbReference>
<dbReference type="PROSITE" id="PS51163">
    <property type="entry name" value="YRDC"/>
    <property type="match status" value="1"/>
</dbReference>
<keyword id="KW-0067">ATP-binding</keyword>
<keyword id="KW-0963">Cytoplasm</keyword>
<keyword id="KW-0547">Nucleotide-binding</keyword>
<keyword id="KW-0548">Nucleotidyltransferase</keyword>
<keyword id="KW-0808">Transferase</keyword>
<keyword id="KW-0819">tRNA processing</keyword>
<reference key="1">
    <citation type="journal article" date="2008" name="PLoS ONE">
        <title>Genome biology of Actinobacillus pleuropneumoniae JL03, an isolate of serotype 3 prevalent in China.</title>
        <authorList>
            <person name="Xu Z."/>
            <person name="Zhou Y."/>
            <person name="Li L."/>
            <person name="Zhou R."/>
            <person name="Xiao S."/>
            <person name="Wan Y."/>
            <person name="Zhang S."/>
            <person name="Wang K."/>
            <person name="Li W."/>
            <person name="Li L."/>
            <person name="Jin H."/>
            <person name="Kang M."/>
            <person name="Dalai B."/>
            <person name="Li T."/>
            <person name="Liu L."/>
            <person name="Cheng Y."/>
            <person name="Zhang L."/>
            <person name="Xu T."/>
            <person name="Zheng H."/>
            <person name="Pu S."/>
            <person name="Wang B."/>
            <person name="Gu W."/>
            <person name="Zhang X.L."/>
            <person name="Zhu G.-F."/>
            <person name="Wang S."/>
            <person name="Zhao G.-P."/>
            <person name="Chen H."/>
        </authorList>
    </citation>
    <scope>NUCLEOTIDE SEQUENCE [LARGE SCALE GENOMIC DNA]</scope>
    <source>
        <strain>JL03</strain>
    </source>
</reference>
<gene>
    <name evidence="1" type="primary">tsaC</name>
    <name type="synonym">rimN</name>
    <name type="ordered locus">APJL_1159</name>
</gene>
<sequence length="184" mass="20545">MNNLENIVEQLKRNRVVAYPTEAVFGLGCNPNNESAVRALLKLKKRPEEKGLILIAPTKELLLPYIDENKLTAAHWQIFETPSERAITWVMPAKKAVPQYLTGQFDTIAVRLCCIPAVIDLCERTGFALTSTSCNLTGQEPCRTADEVKLQFGADFPVLEAETAGKTNPSEIRDIFTQHIFRQG</sequence>
<feature type="chain" id="PRO_0000352891" description="Threonylcarbamoyl-AMP synthase">
    <location>
        <begin position="1"/>
        <end position="184"/>
    </location>
</feature>
<feature type="domain" description="YrdC-like" evidence="1">
    <location>
        <begin position="1"/>
        <end position="184"/>
    </location>
</feature>
<protein>
    <recommendedName>
        <fullName evidence="1">Threonylcarbamoyl-AMP synthase</fullName>
        <shortName evidence="1">TC-AMP synthase</shortName>
        <ecNumber evidence="1">2.7.7.87</ecNumber>
    </recommendedName>
    <alternativeName>
        <fullName evidence="1">L-threonylcarbamoyladenylate synthase</fullName>
    </alternativeName>
    <alternativeName>
        <fullName evidence="1">t(6)A37 threonylcarbamoyladenosine biosynthesis protein TsaC</fullName>
    </alternativeName>
    <alternativeName>
        <fullName evidence="1">tRNA threonylcarbamoyladenosine biosynthesis protein TsaC</fullName>
    </alternativeName>
</protein>
<name>TSAC_ACTPJ</name>
<comment type="function">
    <text evidence="1">Required for the formation of a threonylcarbamoyl group on adenosine at position 37 (t(6)A37) in tRNAs that read codons beginning with adenine. Catalyzes the conversion of L-threonine, HCO(3)(-)/CO(2) and ATP to give threonylcarbamoyl-AMP (TC-AMP) as the acyladenylate intermediate, with the release of diphosphate.</text>
</comment>
<comment type="catalytic activity">
    <reaction evidence="1">
        <text>L-threonine + hydrogencarbonate + ATP = L-threonylcarbamoyladenylate + diphosphate + H2O</text>
        <dbReference type="Rhea" id="RHEA:36407"/>
        <dbReference type="ChEBI" id="CHEBI:15377"/>
        <dbReference type="ChEBI" id="CHEBI:17544"/>
        <dbReference type="ChEBI" id="CHEBI:30616"/>
        <dbReference type="ChEBI" id="CHEBI:33019"/>
        <dbReference type="ChEBI" id="CHEBI:57926"/>
        <dbReference type="ChEBI" id="CHEBI:73682"/>
        <dbReference type="EC" id="2.7.7.87"/>
    </reaction>
</comment>
<comment type="subcellular location">
    <subcellularLocation>
        <location evidence="1">Cytoplasm</location>
    </subcellularLocation>
</comment>
<comment type="similarity">
    <text evidence="1">Belongs to the SUA5 family. TsaC subfamily.</text>
</comment>
<organism>
    <name type="scientific">Actinobacillus pleuropneumoniae serotype 3 (strain JL03)</name>
    <dbReference type="NCBI Taxonomy" id="434271"/>
    <lineage>
        <taxon>Bacteria</taxon>
        <taxon>Pseudomonadati</taxon>
        <taxon>Pseudomonadota</taxon>
        <taxon>Gammaproteobacteria</taxon>
        <taxon>Pasteurellales</taxon>
        <taxon>Pasteurellaceae</taxon>
        <taxon>Actinobacillus</taxon>
    </lineage>
</organism>
<accession>B0BQ80</accession>
<evidence type="ECO:0000255" key="1">
    <source>
        <dbReference type="HAMAP-Rule" id="MF_01852"/>
    </source>
</evidence>
<proteinExistence type="inferred from homology"/>